<protein>
    <recommendedName>
        <fullName evidence="9">ATPase MORC2B</fullName>
        <ecNumber evidence="2">3.6.1.-</ecNumber>
    </recommendedName>
    <alternativeName>
        <fullName evidence="9">MORC family CW-type zinc finger protein 2B</fullName>
    </alternativeName>
    <alternativeName>
        <fullName>TCE6</fullName>
    </alternativeName>
</protein>
<organism>
    <name type="scientific">Mus musculus</name>
    <name type="common">Mouse</name>
    <dbReference type="NCBI Taxonomy" id="10090"/>
    <lineage>
        <taxon>Eukaryota</taxon>
        <taxon>Metazoa</taxon>
        <taxon>Chordata</taxon>
        <taxon>Craniata</taxon>
        <taxon>Vertebrata</taxon>
        <taxon>Euteleostomi</taxon>
        <taxon>Mammalia</taxon>
        <taxon>Eutheria</taxon>
        <taxon>Euarchontoglires</taxon>
        <taxon>Glires</taxon>
        <taxon>Rodentia</taxon>
        <taxon>Myomorpha</taxon>
        <taxon>Muroidea</taxon>
        <taxon>Muridae</taxon>
        <taxon>Murinae</taxon>
        <taxon>Mus</taxon>
        <taxon>Mus</taxon>
    </lineage>
</organism>
<accession>Q8C5W4</accession>
<accession>B8JK02</accession>
<accession>Q8CG24</accession>
<dbReference type="EC" id="3.6.1.-" evidence="2"/>
<dbReference type="EMBL" id="AK077016">
    <property type="protein sequence ID" value="BAC36567.1"/>
    <property type="molecule type" value="mRNA"/>
</dbReference>
<dbReference type="EMBL" id="AF528164">
    <property type="protein sequence ID" value="AAO17388.1"/>
    <property type="molecule type" value="Genomic_DNA"/>
</dbReference>
<dbReference type="EMBL" id="CT033756">
    <property type="status" value="NOT_ANNOTATED_CDS"/>
    <property type="molecule type" value="Genomic_DNA"/>
</dbReference>
<dbReference type="CCDS" id="CCDS37561.1">
    <molecule id="Q8C5W4-1"/>
</dbReference>
<dbReference type="RefSeq" id="NP_001347132.1">
    <molecule id="Q8C5W4-1"/>
    <property type="nucleotide sequence ID" value="NM_001360203.1"/>
</dbReference>
<dbReference type="RefSeq" id="NP_808387.2">
    <molecule id="Q8C5W4-1"/>
    <property type="nucleotide sequence ID" value="NM_177719.4"/>
</dbReference>
<dbReference type="RefSeq" id="XP_006524320.1">
    <molecule id="Q8C5W4-1"/>
    <property type="nucleotide sequence ID" value="XM_006524257.4"/>
</dbReference>
<dbReference type="RefSeq" id="XP_006524321.1">
    <molecule id="Q8C5W4-1"/>
    <property type="nucleotide sequence ID" value="XM_006524258.4"/>
</dbReference>
<dbReference type="RefSeq" id="XP_006524322.1">
    <property type="nucleotide sequence ID" value="XM_006524259.2"/>
</dbReference>
<dbReference type="RefSeq" id="XP_011244746.1">
    <molecule id="Q8C5W4-1"/>
    <property type="nucleotide sequence ID" value="XM_011246444.1"/>
</dbReference>
<dbReference type="SMR" id="Q8C5W4"/>
<dbReference type="BioGRID" id="232160">
    <property type="interactions" value="1"/>
</dbReference>
<dbReference type="FunCoup" id="Q8C5W4">
    <property type="interactions" value="165"/>
</dbReference>
<dbReference type="IntAct" id="Q8C5W4">
    <property type="interactions" value="1"/>
</dbReference>
<dbReference type="STRING" id="10090.ENSMUSP00000123354"/>
<dbReference type="iPTMnet" id="Q8C5W4"/>
<dbReference type="PhosphoSitePlus" id="Q8C5W4"/>
<dbReference type="PaxDb" id="10090-ENSMUSP00000123354"/>
<dbReference type="ProteomicsDB" id="291479">
    <molecule id="Q8C5W4-1"/>
</dbReference>
<dbReference type="ProteomicsDB" id="291480">
    <molecule id="Q8C5W4-2"/>
</dbReference>
<dbReference type="Ensembl" id="ENSMUST00000053896.8">
    <molecule id="Q8C5W4-1"/>
    <property type="protein sequence ID" value="ENSMUSP00000056879.8"/>
    <property type="gene ID" value="ENSMUSG00000048602.10"/>
</dbReference>
<dbReference type="Ensembl" id="ENSMUST00000131954.2">
    <molecule id="Q8C5W4-1"/>
    <property type="protein sequence ID" value="ENSMUSP00000123354.2"/>
    <property type="gene ID" value="ENSMUSG00000048602.10"/>
</dbReference>
<dbReference type="GeneID" id="240069"/>
<dbReference type="KEGG" id="mmu:240069"/>
<dbReference type="UCSC" id="uc008byc.2">
    <molecule id="Q8C5W4-1"/>
    <property type="organism name" value="mouse"/>
</dbReference>
<dbReference type="AGR" id="MGI:3045293"/>
<dbReference type="CTD" id="240069"/>
<dbReference type="MGI" id="MGI:3045293">
    <property type="gene designation" value="Morc2b"/>
</dbReference>
<dbReference type="VEuPathDB" id="HostDB:ENSMUSG00000048602"/>
<dbReference type="eggNOG" id="KOG1845">
    <property type="taxonomic scope" value="Eukaryota"/>
</dbReference>
<dbReference type="GeneTree" id="ENSGT00940000153998"/>
<dbReference type="HOGENOM" id="CLU_011516_0_0_1"/>
<dbReference type="InParanoid" id="Q8C5W4"/>
<dbReference type="OMA" id="ILWNCLR"/>
<dbReference type="OrthoDB" id="10251809at2759"/>
<dbReference type="PhylomeDB" id="Q8C5W4"/>
<dbReference type="TreeFam" id="TF329118"/>
<dbReference type="BioGRID-ORCS" id="240069">
    <property type="hits" value="3 hits in 78 CRISPR screens"/>
</dbReference>
<dbReference type="PRO" id="PR:Q8C5W4"/>
<dbReference type="Proteomes" id="UP000000589">
    <property type="component" value="Chromosome 17"/>
</dbReference>
<dbReference type="RNAct" id="Q8C5W4">
    <property type="molecule type" value="protein"/>
</dbReference>
<dbReference type="Bgee" id="ENSMUSG00000048602">
    <property type="expression patterns" value="Expressed in spermatocyte and 29 other cell types or tissues"/>
</dbReference>
<dbReference type="GO" id="GO:0005634">
    <property type="term" value="C:nucleus"/>
    <property type="evidence" value="ECO:0000315"/>
    <property type="project" value="UniProtKB"/>
</dbReference>
<dbReference type="GO" id="GO:0005524">
    <property type="term" value="F:ATP binding"/>
    <property type="evidence" value="ECO:0007669"/>
    <property type="project" value="UniProtKB-KW"/>
</dbReference>
<dbReference type="GO" id="GO:0016887">
    <property type="term" value="F:ATP hydrolysis activity"/>
    <property type="evidence" value="ECO:0007669"/>
    <property type="project" value="RHEA"/>
</dbReference>
<dbReference type="GO" id="GO:0008270">
    <property type="term" value="F:zinc ion binding"/>
    <property type="evidence" value="ECO:0007669"/>
    <property type="project" value="UniProtKB-KW"/>
</dbReference>
<dbReference type="GO" id="GO:1990918">
    <property type="term" value="P:double-strand break repair involved in meiotic recombination"/>
    <property type="evidence" value="ECO:0000315"/>
    <property type="project" value="UniProtKB"/>
</dbReference>
<dbReference type="GO" id="GO:0007276">
    <property type="term" value="P:gamete generation"/>
    <property type="evidence" value="ECO:0000315"/>
    <property type="project" value="UniProtKB"/>
</dbReference>
<dbReference type="GO" id="GO:0007129">
    <property type="term" value="P:homologous chromosome pairing at meiosis"/>
    <property type="evidence" value="ECO:0000315"/>
    <property type="project" value="UniProtKB"/>
</dbReference>
<dbReference type="CDD" id="cd16931">
    <property type="entry name" value="HATPase_MORC-like"/>
    <property type="match status" value="1"/>
</dbReference>
<dbReference type="FunFam" id="3.30.40.100:FF:000001">
    <property type="entry name" value="MORC family CW-type zinc finger protein 2"/>
    <property type="match status" value="1"/>
</dbReference>
<dbReference type="FunFam" id="3.30.565.10:FF:000027">
    <property type="entry name" value="MORC family CW-type zinc finger protein 2"/>
    <property type="match status" value="1"/>
</dbReference>
<dbReference type="Gene3D" id="3.30.40.100">
    <property type="match status" value="1"/>
</dbReference>
<dbReference type="Gene3D" id="3.30.565.10">
    <property type="entry name" value="Histidine kinase-like ATPase, C-terminal domain"/>
    <property type="match status" value="1"/>
</dbReference>
<dbReference type="InterPro" id="IPR056360">
    <property type="entry name" value="Chromo_MORC2_6th"/>
</dbReference>
<dbReference type="InterPro" id="IPR036890">
    <property type="entry name" value="HATPase_C_sf"/>
</dbReference>
<dbReference type="InterPro" id="IPR041006">
    <property type="entry name" value="Morc_S5"/>
</dbReference>
<dbReference type="InterPro" id="IPR011124">
    <property type="entry name" value="Znf_CW"/>
</dbReference>
<dbReference type="PANTHER" id="PTHR23337:SF5">
    <property type="entry name" value="ATPASE MORC2B"/>
    <property type="match status" value="1"/>
</dbReference>
<dbReference type="PANTHER" id="PTHR23337">
    <property type="entry name" value="ZINC FINGER CW-TYPE COILED-COIL DOMAIN PROTEIN 1"/>
    <property type="match status" value="1"/>
</dbReference>
<dbReference type="Pfam" id="PF23327">
    <property type="entry name" value="Chromo_MORC2_6th"/>
    <property type="match status" value="1"/>
</dbReference>
<dbReference type="Pfam" id="PF13589">
    <property type="entry name" value="HATPase_c_3"/>
    <property type="match status" value="1"/>
</dbReference>
<dbReference type="Pfam" id="PF17942">
    <property type="entry name" value="Morc6_S5"/>
    <property type="match status" value="1"/>
</dbReference>
<dbReference type="Pfam" id="PF07496">
    <property type="entry name" value="zf-CW"/>
    <property type="match status" value="1"/>
</dbReference>
<dbReference type="SUPFAM" id="SSF55874">
    <property type="entry name" value="ATPase domain of HSP90 chaperone/DNA topoisomerase II/histidine kinase"/>
    <property type="match status" value="1"/>
</dbReference>
<dbReference type="PROSITE" id="PS51050">
    <property type="entry name" value="ZF_CW"/>
    <property type="match status" value="1"/>
</dbReference>
<feature type="initiator methionine" description="Removed" evidence="2">
    <location>
        <position position="1"/>
    </location>
</feature>
<feature type="chain" id="PRO_0000248244" description="ATPase MORC2B">
    <location>
        <begin position="2"/>
        <end position="1022"/>
    </location>
</feature>
<feature type="zinc finger region" description="CW-type" evidence="4">
    <location>
        <begin position="490"/>
        <end position="544"/>
    </location>
</feature>
<feature type="coiled-coil region" evidence="3">
    <location>
        <begin position="285"/>
        <end position="362"/>
    </location>
</feature>
<feature type="coiled-coil region" evidence="3">
    <location>
        <begin position="555"/>
        <end position="583"/>
    </location>
</feature>
<feature type="coiled-coil region" evidence="3">
    <location>
        <begin position="962"/>
        <end position="1001"/>
    </location>
</feature>
<feature type="binding site" evidence="2">
    <location>
        <position position="39"/>
    </location>
    <ligand>
        <name>ATP</name>
        <dbReference type="ChEBI" id="CHEBI:30616"/>
    </ligand>
</feature>
<feature type="binding site" evidence="2">
    <location>
        <position position="39"/>
    </location>
    <ligand>
        <name>Mg(2+)</name>
        <dbReference type="ChEBI" id="CHEBI:18420"/>
    </ligand>
</feature>
<feature type="binding site" evidence="2">
    <location>
        <begin position="87"/>
        <end position="89"/>
    </location>
    <ligand>
        <name>ATP</name>
        <dbReference type="ChEBI" id="CHEBI:30616"/>
    </ligand>
</feature>
<feature type="binding site" evidence="2">
    <location>
        <begin position="99"/>
        <end position="105"/>
    </location>
    <ligand>
        <name>ATP</name>
        <dbReference type="ChEBI" id="CHEBI:30616"/>
    </ligand>
</feature>
<feature type="binding site" evidence="2">
    <location>
        <position position="427"/>
    </location>
    <ligand>
        <name>ATP</name>
        <dbReference type="ChEBI" id="CHEBI:30616"/>
    </ligand>
</feature>
<feature type="binding site" evidence="4">
    <location>
        <position position="499"/>
    </location>
    <ligand>
        <name>Zn(2+)</name>
        <dbReference type="ChEBI" id="CHEBI:29105"/>
    </ligand>
</feature>
<feature type="binding site" evidence="4">
    <location>
        <position position="502"/>
    </location>
    <ligand>
        <name>Zn(2+)</name>
        <dbReference type="ChEBI" id="CHEBI:29105"/>
    </ligand>
</feature>
<feature type="binding site" evidence="4">
    <location>
        <position position="525"/>
    </location>
    <ligand>
        <name>Zn(2+)</name>
        <dbReference type="ChEBI" id="CHEBI:29105"/>
    </ligand>
</feature>
<feature type="binding site" evidence="4">
    <location>
        <position position="536"/>
    </location>
    <ligand>
        <name>Zn(2+)</name>
        <dbReference type="ChEBI" id="CHEBI:29105"/>
    </ligand>
</feature>
<feature type="modified residue" description="N-acetylalanine" evidence="2">
    <location>
        <position position="2"/>
    </location>
</feature>
<feature type="modified residue" description="Phosphoserine" evidence="2">
    <location>
        <position position="615"/>
    </location>
</feature>
<feature type="modified residue" description="Phosphoserine" evidence="2">
    <location>
        <position position="690"/>
    </location>
</feature>
<feature type="modified residue" description="Phosphoserine" evidence="2">
    <location>
        <position position="724"/>
    </location>
</feature>
<feature type="modified residue" description="Phosphoserine" evidence="1">
    <location>
        <position position="733"/>
    </location>
</feature>
<feature type="modified residue" description="Phosphoserine" evidence="1">
    <location>
        <position position="737"/>
    </location>
</feature>
<feature type="modified residue" description="Phosphoserine" evidence="1">
    <location>
        <position position="768"/>
    </location>
</feature>
<feature type="modified residue" description="Phosphoserine" evidence="2">
    <location>
        <position position="770"/>
    </location>
</feature>
<feature type="modified residue" description="Phosphothreonine" evidence="1">
    <location>
        <position position="827"/>
    </location>
</feature>
<feature type="modified residue" description="Phosphoserine" evidence="1">
    <location>
        <position position="846"/>
    </location>
</feature>
<feature type="modified residue" description="Phosphoserine" evidence="1">
    <location>
        <position position="851"/>
    </location>
</feature>
<feature type="cross-link" description="Glycyl lysine isopeptide (Lys-Gly) (interchain with G-Cter in SUMO2)" evidence="2">
    <location>
        <position position="649"/>
    </location>
</feature>
<feature type="cross-link" description="Glycyl lysine isopeptide (Lys-Gly) (interchain with G-Cter in SUMO2)" evidence="2">
    <location>
        <position position="758"/>
    </location>
</feature>
<feature type="cross-link" description="Glycyl lysine isopeptide (Lys-Gly) (interchain with G-Cter in SUMO2)" evidence="2">
    <location>
        <position position="922"/>
    </location>
</feature>
<feature type="splice variant" id="VSP_052135" description="In isoform 2." evidence="8">
    <location>
        <begin position="812"/>
        <end position="835"/>
    </location>
</feature>
<feature type="sequence conflict" description="In Ref. 2; AAO17388." evidence="9" ref="2">
    <original>I</original>
    <variation>V</variation>
    <location>
        <position position="521"/>
    </location>
</feature>
<feature type="sequence conflict" description="In Ref. 2; AAO17388." evidence="9" ref="2">
    <original>L</original>
    <variation>P</variation>
    <location>
        <position position="674"/>
    </location>
</feature>
<feature type="sequence conflict" description="In Ref. 1; BAC36567." evidence="9" ref="1">
    <original>K</original>
    <variation>E</variation>
    <location>
        <position position="731"/>
    </location>
</feature>
<feature type="sequence conflict" description="In Ref. 1; BAC36567." evidence="9" ref="1">
    <original>Q</original>
    <variation>R</variation>
    <location>
        <position position="943"/>
    </location>
</feature>
<name>MOR2B_MOUSE</name>
<keyword id="KW-0007">Acetylation</keyword>
<keyword id="KW-0025">Alternative splicing</keyword>
<keyword id="KW-0067">ATP-binding</keyword>
<keyword id="KW-0175">Coiled coil</keyword>
<keyword id="KW-0378">Hydrolase</keyword>
<keyword id="KW-1017">Isopeptide bond</keyword>
<keyword id="KW-0460">Magnesium</keyword>
<keyword id="KW-0479">Metal-binding</keyword>
<keyword id="KW-0547">Nucleotide-binding</keyword>
<keyword id="KW-0539">Nucleus</keyword>
<keyword id="KW-0597">Phosphoprotein</keyword>
<keyword id="KW-1185">Reference proteome</keyword>
<keyword id="KW-0832">Ubl conjugation</keyword>
<keyword id="KW-0862">Zinc</keyword>
<keyword id="KW-0863">Zinc-finger</keyword>
<comment type="function">
    <text evidence="7">Required for chromosomal synapsis and meiotic recombination in males and females.</text>
</comment>
<comment type="catalytic activity">
    <reaction evidence="2">
        <text>ATP + H2O = ADP + phosphate + H(+)</text>
        <dbReference type="Rhea" id="RHEA:13065"/>
        <dbReference type="ChEBI" id="CHEBI:15377"/>
        <dbReference type="ChEBI" id="CHEBI:15378"/>
        <dbReference type="ChEBI" id="CHEBI:30616"/>
        <dbReference type="ChEBI" id="CHEBI:43474"/>
        <dbReference type="ChEBI" id="CHEBI:456216"/>
    </reaction>
</comment>
<comment type="subunit">
    <text evidence="7">Interacts with Morc2a.</text>
</comment>
<comment type="subcellular location">
    <subcellularLocation>
        <location evidence="7">Nucleus</location>
    </subcellularLocation>
</comment>
<comment type="alternative products">
    <event type="alternative splicing"/>
    <isoform>
        <id>Q8C5W4-1</id>
        <name evidence="6">1</name>
        <sequence type="displayed"/>
    </isoform>
    <isoform>
        <id>Q8C5W4-2</id>
        <name evidence="5">2</name>
        <sequence type="described" ref="VSP_052135"/>
    </isoform>
</comment>
<comment type="tissue specificity">
    <text evidence="7">Protein is abundant in testes but not detected in other adult tissues examined (at protein level). Detected in germ cells with a distinct developmental-specific expression pattern but not in somatic cells such as Sertoli cells.</text>
</comment>
<comment type="developmental stage">
    <text evidence="7">In juvenile testes, expression is absent prior to postnatal day 12, is detected at a low level at day 12, and increased significantly at day 14 and beyond. In adul testes, expressed in meiotic spermatocytes, abundant in post-meiotic haploid round spermatids, and absent from elongated spermatids.</text>
</comment>
<comment type="disruption phenotype">
    <text evidence="7">Knockouts are viable and appear to be grossly normal. Mutant males and females show meiotic arrest and sterility. Males have significantly smaller testes than control males. Their testes weigh approximately 70% less than control testes. Their spermatocytes and oocytes exhibit failures in chromosomal synapsis, blockades in meiotic recombination, and increased apoptosis (PubMed:29329290). The ovaries of adult female mutant mice are much smaller than those from heterozygous littermates and are devoid of oocytes (PubMed:29329290).</text>
</comment>
<comment type="miscellaneous">
    <text evidence="7">Retrotransposed homolog of Morc2a.</text>
</comment>
<proteinExistence type="evidence at protein level"/>
<sequence>MAFTNYSTLNRAQLTFDYLHTNSTTHAFLFGALAELIDNARDADATRIDIYAEKREDLQGGFMLCFLDNGVGMDPNDVINVIQFGKSAKRTPESTQIGRYGNGLKSGSMRIGKDFILFTKKENTMSCLFLSRTFHEEEGIDEVIVPLPTWNSQTREPVTDNMEKFAIETELIYKYSPFHTEEEVMTQFTKISGTSGTLVVIFNLKLTDNGEPELDVTSNPKDIRMAEISQEGVKPERHSFCAYAAVLYIDPRMRIFIHGHKVQTKKLCCCLYKPRKYTFTSHRFKTRAEQEVKKADQVAQLAEEKAREAESKARTLEIHMGGDITRDSRVMLRQVQNTAITLRREADVKKRIRDAKQQALKEPKELTFVFGVNIEHRDHDGMFIYNCSRLIKMYEKVGPQLEKGMVCGGVVGVIDVPYLVLEPTHNKQDFADAKEYRHLLRAMGEHLAQYWKDIEIAQHGIIKFWDEFGYLSANWNRPPSDELHFKRKRAMQVPTTIQCDLCLKWRTLPFQLSAVEEGYPINWVCSMNPDPEQDQCEAFELKQKIPLGILKKAPKTQEERQKQLTEKIQQEQRKLKALKKIKPIHSQSDLKKLPLEVTSRPFSKYPAHIFQGPQSSFHVVKTNARRRPQSRHAPFRQLQRSSIICTNPKPPFLVDKTEAVLLQPPETPQKSVSLLVKTIPQPPPLVQSLSPSVVPKSNNPWKVETPQIMNTPVAEMPYVPVNPSLVICDHKRSPEVSDEIEDEDRRKRMCKRGRFTVKKEKIQASELSDSSGEENPVDLKTAQKDKGLYVEVRMMGECYKGHVTAVEVGDNVVWWKVKFEDMPKDSTPRDCWVEKGSENVWLVKPSPEYQSTDEQQEDRKGEEDTVVQQALALQQTSTSECFCTEPDTTASTANHKTIDLLVQILWNCLHYFMPLSFPISKKELGAMNSEELLSLPLKECFKQYEVGLQNLCRSYQRCADSQAKVSEESLRISQKKLQETEEKLQKLRTNIQTLLQMAQQGINIRADDELDAYIEDLVSSDD</sequence>
<reference evidence="9 11" key="1">
    <citation type="journal article" date="2005" name="Science">
        <title>The transcriptional landscape of the mammalian genome.</title>
        <authorList>
            <person name="Carninci P."/>
            <person name="Kasukawa T."/>
            <person name="Katayama S."/>
            <person name="Gough J."/>
            <person name="Frith M.C."/>
            <person name="Maeda N."/>
            <person name="Oyama R."/>
            <person name="Ravasi T."/>
            <person name="Lenhard B."/>
            <person name="Wells C."/>
            <person name="Kodzius R."/>
            <person name="Shimokawa K."/>
            <person name="Bajic V.B."/>
            <person name="Brenner S.E."/>
            <person name="Batalov S."/>
            <person name="Forrest A.R."/>
            <person name="Zavolan M."/>
            <person name="Davis M.J."/>
            <person name="Wilming L.G."/>
            <person name="Aidinis V."/>
            <person name="Allen J.E."/>
            <person name="Ambesi-Impiombato A."/>
            <person name="Apweiler R."/>
            <person name="Aturaliya R.N."/>
            <person name="Bailey T.L."/>
            <person name="Bansal M."/>
            <person name="Baxter L."/>
            <person name="Beisel K.W."/>
            <person name="Bersano T."/>
            <person name="Bono H."/>
            <person name="Chalk A.M."/>
            <person name="Chiu K.P."/>
            <person name="Choudhary V."/>
            <person name="Christoffels A."/>
            <person name="Clutterbuck D.R."/>
            <person name="Crowe M.L."/>
            <person name="Dalla E."/>
            <person name="Dalrymple B.P."/>
            <person name="de Bono B."/>
            <person name="Della Gatta G."/>
            <person name="di Bernardo D."/>
            <person name="Down T."/>
            <person name="Engstrom P."/>
            <person name="Fagiolini M."/>
            <person name="Faulkner G."/>
            <person name="Fletcher C.F."/>
            <person name="Fukushima T."/>
            <person name="Furuno M."/>
            <person name="Futaki S."/>
            <person name="Gariboldi M."/>
            <person name="Georgii-Hemming P."/>
            <person name="Gingeras T.R."/>
            <person name="Gojobori T."/>
            <person name="Green R.E."/>
            <person name="Gustincich S."/>
            <person name="Harbers M."/>
            <person name="Hayashi Y."/>
            <person name="Hensch T.K."/>
            <person name="Hirokawa N."/>
            <person name="Hill D."/>
            <person name="Huminiecki L."/>
            <person name="Iacono M."/>
            <person name="Ikeo K."/>
            <person name="Iwama A."/>
            <person name="Ishikawa T."/>
            <person name="Jakt M."/>
            <person name="Kanapin A."/>
            <person name="Katoh M."/>
            <person name="Kawasawa Y."/>
            <person name="Kelso J."/>
            <person name="Kitamura H."/>
            <person name="Kitano H."/>
            <person name="Kollias G."/>
            <person name="Krishnan S.P."/>
            <person name="Kruger A."/>
            <person name="Kummerfeld S.K."/>
            <person name="Kurochkin I.V."/>
            <person name="Lareau L.F."/>
            <person name="Lazarevic D."/>
            <person name="Lipovich L."/>
            <person name="Liu J."/>
            <person name="Liuni S."/>
            <person name="McWilliam S."/>
            <person name="Madan Babu M."/>
            <person name="Madera M."/>
            <person name="Marchionni L."/>
            <person name="Matsuda H."/>
            <person name="Matsuzawa S."/>
            <person name="Miki H."/>
            <person name="Mignone F."/>
            <person name="Miyake S."/>
            <person name="Morris K."/>
            <person name="Mottagui-Tabar S."/>
            <person name="Mulder N."/>
            <person name="Nakano N."/>
            <person name="Nakauchi H."/>
            <person name="Ng P."/>
            <person name="Nilsson R."/>
            <person name="Nishiguchi S."/>
            <person name="Nishikawa S."/>
            <person name="Nori F."/>
            <person name="Ohara O."/>
            <person name="Okazaki Y."/>
            <person name="Orlando V."/>
            <person name="Pang K.C."/>
            <person name="Pavan W.J."/>
            <person name="Pavesi G."/>
            <person name="Pesole G."/>
            <person name="Petrovsky N."/>
            <person name="Piazza S."/>
            <person name="Reed J."/>
            <person name="Reid J.F."/>
            <person name="Ring B.Z."/>
            <person name="Ringwald M."/>
            <person name="Rost B."/>
            <person name="Ruan Y."/>
            <person name="Salzberg S.L."/>
            <person name="Sandelin A."/>
            <person name="Schneider C."/>
            <person name="Schoenbach C."/>
            <person name="Sekiguchi K."/>
            <person name="Semple C.A."/>
            <person name="Seno S."/>
            <person name="Sessa L."/>
            <person name="Sheng Y."/>
            <person name="Shibata Y."/>
            <person name="Shimada H."/>
            <person name="Shimada K."/>
            <person name="Silva D."/>
            <person name="Sinclair B."/>
            <person name="Sperling S."/>
            <person name="Stupka E."/>
            <person name="Sugiura K."/>
            <person name="Sultana R."/>
            <person name="Takenaka Y."/>
            <person name="Taki K."/>
            <person name="Tammoja K."/>
            <person name="Tan S.L."/>
            <person name="Tang S."/>
            <person name="Taylor M.S."/>
            <person name="Tegner J."/>
            <person name="Teichmann S.A."/>
            <person name="Ueda H.R."/>
            <person name="van Nimwegen E."/>
            <person name="Verardo R."/>
            <person name="Wei C.L."/>
            <person name="Yagi K."/>
            <person name="Yamanishi H."/>
            <person name="Zabarovsky E."/>
            <person name="Zhu S."/>
            <person name="Zimmer A."/>
            <person name="Hide W."/>
            <person name="Bult C."/>
            <person name="Grimmond S.M."/>
            <person name="Teasdale R.D."/>
            <person name="Liu E.T."/>
            <person name="Brusic V."/>
            <person name="Quackenbush J."/>
            <person name="Wahlestedt C."/>
            <person name="Mattick J.S."/>
            <person name="Hume D.A."/>
            <person name="Kai C."/>
            <person name="Sasaki D."/>
            <person name="Tomaru Y."/>
            <person name="Fukuda S."/>
            <person name="Kanamori-Katayama M."/>
            <person name="Suzuki M."/>
            <person name="Aoki J."/>
            <person name="Arakawa T."/>
            <person name="Iida J."/>
            <person name="Imamura K."/>
            <person name="Itoh M."/>
            <person name="Kato T."/>
            <person name="Kawaji H."/>
            <person name="Kawagashira N."/>
            <person name="Kawashima T."/>
            <person name="Kojima M."/>
            <person name="Kondo S."/>
            <person name="Konno H."/>
            <person name="Nakano K."/>
            <person name="Ninomiya N."/>
            <person name="Nishio T."/>
            <person name="Okada M."/>
            <person name="Plessy C."/>
            <person name="Shibata K."/>
            <person name="Shiraki T."/>
            <person name="Suzuki S."/>
            <person name="Tagami M."/>
            <person name="Waki K."/>
            <person name="Watahiki A."/>
            <person name="Okamura-Oho Y."/>
            <person name="Suzuki H."/>
            <person name="Kawai J."/>
            <person name="Hayashizaki Y."/>
        </authorList>
    </citation>
    <scope>NUCLEOTIDE SEQUENCE [LARGE SCALE MRNA] (ISOFORM 1)</scope>
    <source>
        <strain evidence="11">C57BL/6J</strain>
        <tissue evidence="11">Testis</tissue>
    </source>
</reference>
<reference evidence="9 10" key="2">
    <citation type="journal article" date="2004" name="Mamm. Genome">
        <title>Gene content of the 750-kb critical region for mouse embryonic ectoderm lethal tcl-w5.</title>
        <authorList>
            <person name="Abe K."/>
            <person name="Yuzuriha M."/>
            <person name="Sugimoto M."/>
            <person name="Ko M.S."/>
            <person name="Brathwaite M.E."/>
            <person name="Waeltz P."/>
            <person name="Nagaraja R."/>
        </authorList>
    </citation>
    <scope>NUCLEOTIDE SEQUENCE [LARGE SCALE GENOMIC DNA]</scope>
    <source>
        <strain evidence="10">129/Sv</strain>
    </source>
</reference>
<reference key="3">
    <citation type="journal article" date="2009" name="PLoS Biol.">
        <title>Lineage-specific biology revealed by a finished genome assembly of the mouse.</title>
        <authorList>
            <person name="Church D.M."/>
            <person name="Goodstadt L."/>
            <person name="Hillier L.W."/>
            <person name="Zody M.C."/>
            <person name="Goldstein S."/>
            <person name="She X."/>
            <person name="Bult C.J."/>
            <person name="Agarwala R."/>
            <person name="Cherry J.L."/>
            <person name="DiCuccio M."/>
            <person name="Hlavina W."/>
            <person name="Kapustin Y."/>
            <person name="Meric P."/>
            <person name="Maglott D."/>
            <person name="Birtle Z."/>
            <person name="Marques A.C."/>
            <person name="Graves T."/>
            <person name="Zhou S."/>
            <person name="Teague B."/>
            <person name="Potamousis K."/>
            <person name="Churas C."/>
            <person name="Place M."/>
            <person name="Herschleb J."/>
            <person name="Runnheim R."/>
            <person name="Forrest D."/>
            <person name="Amos-Landgraf J."/>
            <person name="Schwartz D.C."/>
            <person name="Cheng Z."/>
            <person name="Lindblad-Toh K."/>
            <person name="Eichler E.E."/>
            <person name="Ponting C.P."/>
        </authorList>
    </citation>
    <scope>NUCLEOTIDE SEQUENCE [LARGE SCALE GENOMIC DNA]</scope>
    <source>
        <strain>C57BL/6J</strain>
    </source>
</reference>
<reference key="4">
    <citation type="journal article" date="2018" name="PLoS Genet.">
        <title>MORC2B is essential for meiotic progression and fertility.</title>
        <authorList>
            <person name="Shi B."/>
            <person name="Xue J."/>
            <person name="Zhou J."/>
            <person name="Kasowitz S.D."/>
            <person name="Zhang Y."/>
            <person name="Liang G."/>
            <person name="Guan Y."/>
            <person name="Shi Q."/>
            <person name="Liu M."/>
            <person name="Sha J."/>
            <person name="Huang X."/>
            <person name="Wang P.J."/>
        </authorList>
    </citation>
    <scope>FUNCTION</scope>
    <scope>DISRUPTION PHENOTYPE</scope>
    <scope>INTERACTION WITH MORC2A</scope>
    <scope>TISSUE SPECIFICITY</scope>
    <scope>DEVELOPMENTAL STAGE</scope>
    <scope>SUBCELLULAR LOCATION</scope>
</reference>
<evidence type="ECO:0000250" key="1">
    <source>
        <dbReference type="UniProtKB" id="Q69ZX6"/>
    </source>
</evidence>
<evidence type="ECO:0000250" key="2">
    <source>
        <dbReference type="UniProtKB" id="Q9Y6X9"/>
    </source>
</evidence>
<evidence type="ECO:0000255" key="3"/>
<evidence type="ECO:0000255" key="4">
    <source>
        <dbReference type="PROSITE-ProRule" id="PRU00454"/>
    </source>
</evidence>
<evidence type="ECO:0000269" key="5">
    <source>
    </source>
</evidence>
<evidence type="ECO:0000269" key="6">
    <source>
    </source>
</evidence>
<evidence type="ECO:0000269" key="7">
    <source>
    </source>
</evidence>
<evidence type="ECO:0000303" key="8">
    <source>
    </source>
</evidence>
<evidence type="ECO:0000305" key="9"/>
<evidence type="ECO:0000312" key="10">
    <source>
        <dbReference type="EMBL" id="AAO17388.1"/>
    </source>
</evidence>
<evidence type="ECO:0000312" key="11">
    <source>
        <dbReference type="EMBL" id="BAC36567.1"/>
    </source>
</evidence>
<evidence type="ECO:0000312" key="12">
    <source>
        <dbReference type="MGI" id="MGI:3045293"/>
    </source>
</evidence>
<gene>
    <name evidence="12" type="primary">Morc2b</name>
    <name evidence="10" type="synonym">Tce6</name>
</gene>